<sequence>MSVAITSNNNKQPQPQPQPHLKVVNNNSTFNLYTWLRSVFQYCISLIISYTSNWLLVNNDNNNNNININYKSNNNDNNNASTSLQPKISNVKAESMKIFPDLQKSNFTTYYTTEKPLHQDVLKPVICSTGITSRILPYTNEKGELEWKFTEVQGKELDEFKMHPQQQQQQQEVKQELSPAESNESNESLAKDSSTTPASISDSPSHSETESTVSSTIIANSNQIFKCPSCDAEFRVRGYLTRHMKKHSTKKAYTCPFHDKSIYVDENNITHKCHSSGGFSRRDTYKTHLKSRHFNYAKPIKSAERSKVPGQCAMCGEHFNSAEIWCEIHVEGGECKFLPMGFKGKSRIKNRLKKQIQKNKMIDPELVPFASKVLEEVEQERQKKKNYRTTGTGSESSIQSQESESSINSTPLSMQISAPVPMPVSIQQQHQHQHQHHHHVQNQHQQHVNQQQSIATPASIYSSSASSTSSYESTHSPYTPQSSRSPLSHMYNPQQPPYFNQIAQAHQQDGQKNQVKDDYDDEYCLDVDQLNTTFVNETVANYLQIHDFHSMNQYQPGQQQQQQQQQQQQQQQRQHQQQQPSMYF</sequence>
<feature type="propeptide" id="PRO_0000426056">
    <location>
        <begin position="1"/>
        <end status="unknown"/>
    </location>
</feature>
<feature type="chain" id="PRO_0000426057" description="Transcriptional regulator STP2">
    <location>
        <begin status="unknown"/>
        <end position="584"/>
    </location>
</feature>
<feature type="zinc finger region" description="C2H2-type" evidence="2">
    <location>
        <begin position="225"/>
        <end position="247"/>
    </location>
</feature>
<feature type="region of interest" description="Disordered" evidence="3">
    <location>
        <begin position="1"/>
        <end position="22"/>
    </location>
</feature>
<feature type="region of interest" description="Disordered" evidence="3">
    <location>
        <begin position="161"/>
        <end position="214"/>
    </location>
</feature>
<feature type="region of interest" description="Disordered" evidence="3">
    <location>
        <begin position="381"/>
        <end position="496"/>
    </location>
</feature>
<feature type="region of interest" description="Disordered" evidence="3">
    <location>
        <begin position="553"/>
        <end position="584"/>
    </location>
</feature>
<feature type="compositionally biased region" description="Polar residues" evidence="3">
    <location>
        <begin position="1"/>
        <end position="11"/>
    </location>
</feature>
<feature type="compositionally biased region" description="Polar residues" evidence="3">
    <location>
        <begin position="180"/>
        <end position="202"/>
    </location>
</feature>
<feature type="compositionally biased region" description="Low complexity" evidence="3">
    <location>
        <begin position="203"/>
        <end position="214"/>
    </location>
</feature>
<feature type="compositionally biased region" description="Low complexity" evidence="3">
    <location>
        <begin position="394"/>
        <end position="407"/>
    </location>
</feature>
<feature type="compositionally biased region" description="Basic residues" evidence="3">
    <location>
        <begin position="431"/>
        <end position="441"/>
    </location>
</feature>
<feature type="compositionally biased region" description="Low complexity" evidence="3">
    <location>
        <begin position="442"/>
        <end position="480"/>
    </location>
</feature>
<feature type="compositionally biased region" description="Polar residues" evidence="3">
    <location>
        <begin position="481"/>
        <end position="496"/>
    </location>
</feature>
<dbReference type="EMBL" id="CP017623">
    <property type="protein sequence ID" value="AOW26940.1"/>
    <property type="molecule type" value="Genomic_DNA"/>
</dbReference>
<dbReference type="RefSeq" id="XP_722171.1">
    <property type="nucleotide sequence ID" value="XM_717078.2"/>
</dbReference>
<dbReference type="BioGRID" id="1219149">
    <property type="interactions" value="1"/>
</dbReference>
<dbReference type="STRING" id="237561.Q5AL16"/>
<dbReference type="EnsemblFungi" id="C1_13350W_A-T">
    <property type="protein sequence ID" value="C1_13350W_A-T-p1"/>
    <property type="gene ID" value="C1_13350W_A"/>
</dbReference>
<dbReference type="GeneID" id="3636214"/>
<dbReference type="KEGG" id="cal:CAALFM_C113350WA"/>
<dbReference type="CGD" id="CAL0000195044">
    <property type="gene designation" value="STP2"/>
</dbReference>
<dbReference type="VEuPathDB" id="FungiDB:C1_13350W_A"/>
<dbReference type="eggNOG" id="ENOG502S1NP">
    <property type="taxonomic scope" value="Eukaryota"/>
</dbReference>
<dbReference type="HOGENOM" id="CLU_027007_0_0_1"/>
<dbReference type="InParanoid" id="Q5AL16"/>
<dbReference type="OrthoDB" id="9439903at2759"/>
<dbReference type="PHI-base" id="PHI:11404"/>
<dbReference type="PHI-base" id="PHI:4193"/>
<dbReference type="PRO" id="PR:Q5AL16"/>
<dbReference type="Proteomes" id="UP000000559">
    <property type="component" value="Chromosome 1"/>
</dbReference>
<dbReference type="GO" id="GO:0005737">
    <property type="term" value="C:cytoplasm"/>
    <property type="evidence" value="ECO:0000250"/>
    <property type="project" value="CGD"/>
</dbReference>
<dbReference type="GO" id="GO:0005634">
    <property type="term" value="C:nucleus"/>
    <property type="evidence" value="ECO:0000314"/>
    <property type="project" value="CGD"/>
</dbReference>
<dbReference type="GO" id="GO:0005886">
    <property type="term" value="C:plasma membrane"/>
    <property type="evidence" value="ECO:0007669"/>
    <property type="project" value="UniProtKB-SubCell"/>
</dbReference>
<dbReference type="GO" id="GO:0003700">
    <property type="term" value="F:DNA-binding transcription factor activity"/>
    <property type="evidence" value="ECO:0000315"/>
    <property type="project" value="CGD"/>
</dbReference>
<dbReference type="GO" id="GO:0000981">
    <property type="term" value="F:DNA-binding transcription factor activity, RNA polymerase II-specific"/>
    <property type="evidence" value="ECO:0000318"/>
    <property type="project" value="GO_Central"/>
</dbReference>
<dbReference type="GO" id="GO:0000978">
    <property type="term" value="F:RNA polymerase II cis-regulatory region sequence-specific DNA binding"/>
    <property type="evidence" value="ECO:0000318"/>
    <property type="project" value="GO_Central"/>
</dbReference>
<dbReference type="GO" id="GO:0008270">
    <property type="term" value="F:zinc ion binding"/>
    <property type="evidence" value="ECO:0007669"/>
    <property type="project" value="UniProtKB-KW"/>
</dbReference>
<dbReference type="GO" id="GO:0043090">
    <property type="term" value="P:amino acid import"/>
    <property type="evidence" value="ECO:0000315"/>
    <property type="project" value="CGD"/>
</dbReference>
<dbReference type="GO" id="GO:0071469">
    <property type="term" value="P:cellular response to alkaline pH"/>
    <property type="evidence" value="ECO:0000315"/>
    <property type="project" value="CGD"/>
</dbReference>
<dbReference type="GO" id="GO:0034605">
    <property type="term" value="P:cellular response to heat"/>
    <property type="evidence" value="ECO:0000315"/>
    <property type="project" value="CGD"/>
</dbReference>
<dbReference type="GO" id="GO:0034599">
    <property type="term" value="P:cellular response to oxidative stress"/>
    <property type="evidence" value="ECO:0000315"/>
    <property type="project" value="CGD"/>
</dbReference>
<dbReference type="GO" id="GO:0030447">
    <property type="term" value="P:filamentous growth"/>
    <property type="evidence" value="ECO:0000315"/>
    <property type="project" value="CGD"/>
</dbReference>
<dbReference type="GO" id="GO:0036171">
    <property type="term" value="P:filamentous growth of a population of unicellular organisms in response to chemical stimulus"/>
    <property type="evidence" value="ECO:0000315"/>
    <property type="project" value="CGD"/>
</dbReference>
<dbReference type="GO" id="GO:1900439">
    <property type="term" value="P:positive regulation of filamentous growth of a population of unicellular organisms in response to chemical stimulus"/>
    <property type="evidence" value="ECO:0000315"/>
    <property type="project" value="CGD"/>
</dbReference>
<dbReference type="GO" id="GO:0045944">
    <property type="term" value="P:positive regulation of transcription by RNA polymerase II"/>
    <property type="evidence" value="ECO:0000315"/>
    <property type="project" value="CGD"/>
</dbReference>
<dbReference type="GO" id="GO:0006357">
    <property type="term" value="P:regulation of transcription by RNA polymerase II"/>
    <property type="evidence" value="ECO:0000318"/>
    <property type="project" value="GO_Central"/>
</dbReference>
<dbReference type="Gene3D" id="3.30.160.60">
    <property type="entry name" value="Classic Zinc Finger"/>
    <property type="match status" value="1"/>
</dbReference>
<dbReference type="InterPro" id="IPR051643">
    <property type="entry name" value="Transcr_Reg_ZincFinger"/>
</dbReference>
<dbReference type="InterPro" id="IPR036236">
    <property type="entry name" value="Znf_C2H2_sf"/>
</dbReference>
<dbReference type="InterPro" id="IPR013087">
    <property type="entry name" value="Znf_C2H2_type"/>
</dbReference>
<dbReference type="PANTHER" id="PTHR24396:SF19">
    <property type="entry name" value="FI01119P"/>
    <property type="match status" value="1"/>
</dbReference>
<dbReference type="PANTHER" id="PTHR24396">
    <property type="entry name" value="ZINC FINGER PROTEIN"/>
    <property type="match status" value="1"/>
</dbReference>
<dbReference type="SMART" id="SM00355">
    <property type="entry name" value="ZnF_C2H2"/>
    <property type="match status" value="2"/>
</dbReference>
<dbReference type="SUPFAM" id="SSF57667">
    <property type="entry name" value="beta-beta-alpha zinc fingers"/>
    <property type="match status" value="1"/>
</dbReference>
<dbReference type="PROSITE" id="PS00028">
    <property type="entry name" value="ZINC_FINGER_C2H2_1"/>
    <property type="match status" value="1"/>
</dbReference>
<dbReference type="PROSITE" id="PS50157">
    <property type="entry name" value="ZINC_FINGER_C2H2_2"/>
    <property type="match status" value="1"/>
</dbReference>
<proteinExistence type="evidence at protein level"/>
<gene>
    <name type="primary">STP2</name>
    <name type="ordered locus">CAALFM_C113350WA</name>
    <name type="ORF">CaO19.12426</name>
    <name type="ORF">CaO19.4961</name>
</gene>
<comment type="function">
    <text evidence="4 5 6">Transcription factor involved in the regulation of gene expression in response to extracellular amino acid levels. Synthesized as latent cytoplasmic precursor, which, upon a signal initiated by the plasma membrane SPS amino acid sensor system (including CSY1 and CSH3), becomes proteolytically activated and relocates to the nucleus, where it induces the expression of SPS-sensor-regulated genes. Required for efficient alkalinization through the release of ammonia from the cells produced during the breakdown of amino acids, and subsequent switch to the hyphal form.</text>
</comment>
<comment type="subcellular location">
    <subcellularLocation>
        <location evidence="1">Cell membrane</location>
        <topology evidence="1">Peripheral membrane protein</topology>
        <orientation evidence="1">Cytoplasmic side</orientation>
    </subcellularLocation>
    <subcellularLocation>
        <location evidence="1">Nucleus</location>
    </subcellularLocation>
    <text evidence="1">Localizes to the cytoplasm in its unprocessed form and is targeted to the nucleus after proteolytic processing upon induction by amino acids.</text>
</comment>
<comment type="PTM">
    <text evidence="4">Proteolytically cleaved: activated by the amino acid-induced proteolytic removal of an N-terminal inhibitory domain.</text>
</comment>
<comment type="disruption phenotype">
    <text evidence="4 7 8">Exhibits reduced capacity to take up amino acids and to switch to the hyphal form, and impairs response to farnesol.</text>
</comment>
<name>STP2_CANAL</name>
<protein>
    <recommendedName>
        <fullName>Transcriptional regulator STP2</fullName>
    </recommendedName>
</protein>
<reference key="1">
    <citation type="journal article" date="2004" name="Proc. Natl. Acad. Sci. U.S.A.">
        <title>The diploid genome sequence of Candida albicans.</title>
        <authorList>
            <person name="Jones T."/>
            <person name="Federspiel N.A."/>
            <person name="Chibana H."/>
            <person name="Dungan J."/>
            <person name="Kalman S."/>
            <person name="Magee B.B."/>
            <person name="Newport G."/>
            <person name="Thorstenson Y.R."/>
            <person name="Agabian N."/>
            <person name="Magee P.T."/>
            <person name="Davis R.W."/>
            <person name="Scherer S."/>
        </authorList>
    </citation>
    <scope>NUCLEOTIDE SEQUENCE [LARGE SCALE GENOMIC DNA]</scope>
    <source>
        <strain>SC5314 / ATCC MYA-2876</strain>
    </source>
</reference>
<reference key="2">
    <citation type="journal article" date="2007" name="Genome Biol.">
        <title>Assembly of the Candida albicans genome into sixteen supercontigs aligned on the eight chromosomes.</title>
        <authorList>
            <person name="van het Hoog M."/>
            <person name="Rast T.J."/>
            <person name="Martchenko M."/>
            <person name="Grindle S."/>
            <person name="Dignard D."/>
            <person name="Hogues H."/>
            <person name="Cuomo C."/>
            <person name="Berriman M."/>
            <person name="Scherer S."/>
            <person name="Magee B.B."/>
            <person name="Whiteway M."/>
            <person name="Chibana H."/>
            <person name="Nantel A."/>
            <person name="Magee P.T."/>
        </authorList>
    </citation>
    <scope>GENOME REANNOTATION</scope>
    <source>
        <strain>SC5314 / ATCC MYA-2876</strain>
    </source>
</reference>
<reference key="3">
    <citation type="journal article" date="2013" name="Genome Biol.">
        <title>Assembly of a phased diploid Candida albicans genome facilitates allele-specific measurements and provides a simple model for repeat and indel structure.</title>
        <authorList>
            <person name="Muzzey D."/>
            <person name="Schwartz K."/>
            <person name="Weissman J.S."/>
            <person name="Sherlock G."/>
        </authorList>
    </citation>
    <scope>NUCLEOTIDE SEQUENCE [LARGE SCALE GENOMIC DNA]</scope>
    <scope>GENOME REANNOTATION</scope>
    <source>
        <strain>SC5314 / ATCC MYA-2876</strain>
    </source>
</reference>
<reference key="4">
    <citation type="journal article" date="2005" name="Mol. Cell. Biol.">
        <title>Divergence of Stp1 and Stp2 transcription factors in Candida albicans places virulence factors required for proper nutrient acquisition under amino acid control.</title>
        <authorList>
            <person name="Martinez P."/>
            <person name="Ljungdahl P.O."/>
        </authorList>
    </citation>
    <scope>FUNCTION</scope>
    <scope>DISRUPTION PHENOTYPE</scope>
    <scope>PROTEOLYTIC PROCESSING</scope>
</reference>
<reference key="5">
    <citation type="journal article" date="2011" name="MBio">
        <title>The fungal pathogen Candida albicans autoinduces hyphal morphogenesis by raising extracellular pH.</title>
        <authorList>
            <person name="Vylkova S."/>
            <person name="Carman A.J."/>
            <person name="Danhof H.A."/>
            <person name="Collette J.R."/>
            <person name="Zhou H."/>
            <person name="Lorenz M.C."/>
        </authorList>
    </citation>
    <scope>FUNCTION</scope>
</reference>
<reference key="6">
    <citation type="journal article" date="2011" name="PLoS ONE">
        <title>Wild-type Drosophila melanogaster as a model host to analyze nitrogen source dependent virulence of Candida albicans.</title>
        <authorList>
            <person name="Davis M.M."/>
            <person name="Alvarez F.J."/>
            <person name="Ryman K."/>
            <person name="Holm A.A."/>
            <person name="Ljungdahl P.O."/>
            <person name="Engstrom Y."/>
        </authorList>
    </citation>
    <scope>FUNCTION</scope>
</reference>
<reference key="7">
    <citation type="journal article" date="2012" name="Curr. Biol.">
        <title>Pho85, Pcl1, and Hms1 signaling governs Candida albicans morphogenesis induced by high temperature or Hsp90 compromise.</title>
        <authorList>
            <person name="Shapiro R.S."/>
            <person name="Sellam A."/>
            <person name="Tebbji F."/>
            <person name="Whiteway M."/>
            <person name="Nantel A."/>
            <person name="Cowen L.E."/>
        </authorList>
    </citation>
    <scope>DISRUPTION PHENOTYPE</scope>
</reference>
<reference key="8">
    <citation type="journal article" date="2013" name="Eukaryot. Cell">
        <title>Candida albicans Czf1 and Efg1 coordinate the response to farnesol during quorum sensing, white-opaque thermal dimorphism, and cell death.</title>
        <authorList>
            <person name="Langford M.L."/>
            <person name="Hargarten J.C."/>
            <person name="Patefield K.D."/>
            <person name="Marta E."/>
            <person name="Blankenship J.R."/>
            <person name="Fanning S."/>
            <person name="Nickerson K.W."/>
            <person name="Atkin A.L."/>
        </authorList>
    </citation>
    <scope>DISRUPTION PHENOTYPE</scope>
</reference>
<evidence type="ECO:0000250" key="1"/>
<evidence type="ECO:0000255" key="2">
    <source>
        <dbReference type="PROSITE-ProRule" id="PRU00042"/>
    </source>
</evidence>
<evidence type="ECO:0000256" key="3">
    <source>
        <dbReference type="SAM" id="MobiDB-lite"/>
    </source>
</evidence>
<evidence type="ECO:0000269" key="4">
    <source>
    </source>
</evidence>
<evidence type="ECO:0000269" key="5">
    <source>
    </source>
</evidence>
<evidence type="ECO:0000269" key="6">
    <source>
    </source>
</evidence>
<evidence type="ECO:0000269" key="7">
    <source>
    </source>
</evidence>
<evidence type="ECO:0000269" key="8">
    <source>
    </source>
</evidence>
<accession>Q5AL16</accession>
<accession>A0A1D8PFM6</accession>
<keyword id="KW-1003">Cell membrane</keyword>
<keyword id="KW-0238">DNA-binding</keyword>
<keyword id="KW-0472">Membrane</keyword>
<keyword id="KW-0479">Metal-binding</keyword>
<keyword id="KW-0539">Nucleus</keyword>
<keyword id="KW-1185">Reference proteome</keyword>
<keyword id="KW-0677">Repeat</keyword>
<keyword id="KW-0843">Virulence</keyword>
<keyword id="KW-0862">Zinc</keyword>
<keyword id="KW-0863">Zinc-finger</keyword>
<keyword id="KW-0865">Zymogen</keyword>
<organism>
    <name type="scientific">Candida albicans (strain SC5314 / ATCC MYA-2876)</name>
    <name type="common">Yeast</name>
    <dbReference type="NCBI Taxonomy" id="237561"/>
    <lineage>
        <taxon>Eukaryota</taxon>
        <taxon>Fungi</taxon>
        <taxon>Dikarya</taxon>
        <taxon>Ascomycota</taxon>
        <taxon>Saccharomycotina</taxon>
        <taxon>Pichiomycetes</taxon>
        <taxon>Debaryomycetaceae</taxon>
        <taxon>Candida/Lodderomyces clade</taxon>
        <taxon>Candida</taxon>
    </lineage>
</organism>